<keyword id="KW-0963">Cytoplasm</keyword>
<keyword id="KW-1185">Reference proteome</keyword>
<keyword id="KW-0694">RNA-binding</keyword>
<accession>C4L8Z2</accession>
<gene>
    <name evidence="1" type="primary">smpB</name>
    <name type="ordered locus">Tola_2264</name>
</gene>
<feature type="chain" id="PRO_1000201944" description="SsrA-binding protein">
    <location>
        <begin position="1"/>
        <end position="160"/>
    </location>
</feature>
<feature type="region of interest" description="Disordered" evidence="2">
    <location>
        <begin position="133"/>
        <end position="160"/>
    </location>
</feature>
<comment type="function">
    <text evidence="1">Required for rescue of stalled ribosomes mediated by trans-translation. Binds to transfer-messenger RNA (tmRNA), required for stable association of tmRNA with ribosomes. tmRNA and SmpB together mimic tRNA shape, replacing the anticodon stem-loop with SmpB. tmRNA is encoded by the ssrA gene; the 2 termini fold to resemble tRNA(Ala) and it encodes a 'tag peptide', a short internal open reading frame. During trans-translation Ala-aminoacylated tmRNA acts like a tRNA, entering the A-site of stalled ribosomes, displacing the stalled mRNA. The ribosome then switches to translate the ORF on the tmRNA; the nascent peptide is terminated with the 'tag peptide' encoded by the tmRNA and targeted for degradation. The ribosome is freed to recommence translation, which seems to be the essential function of trans-translation.</text>
</comment>
<comment type="subcellular location">
    <subcellularLocation>
        <location evidence="1">Cytoplasm</location>
    </subcellularLocation>
    <text evidence="1">The tmRNA-SmpB complex associates with stalled 70S ribosomes.</text>
</comment>
<comment type="similarity">
    <text evidence="1">Belongs to the SmpB family.</text>
</comment>
<organism>
    <name type="scientific">Tolumonas auensis (strain DSM 9187 / NBRC 110442 / TA 4)</name>
    <dbReference type="NCBI Taxonomy" id="595494"/>
    <lineage>
        <taxon>Bacteria</taxon>
        <taxon>Pseudomonadati</taxon>
        <taxon>Pseudomonadota</taxon>
        <taxon>Gammaproteobacteria</taxon>
        <taxon>Aeromonadales</taxon>
        <taxon>Aeromonadaceae</taxon>
        <taxon>Tolumonas</taxon>
    </lineage>
</organism>
<sequence>MSKNKTKKGGDSTIALNKKARHDYFIEDKYEAGLALQGWEVKSLRAGKAHIGDSYVLLQNGEAFLFGATITPLNVASTHVVCDPTRIRKLLLKKSELERLIGLVERQSYTLIPLSMYWSRAWVKVEIGLAKGKKEHDKREDLKEREWQRDKERMMKNKGR</sequence>
<name>SSRP_TOLAT</name>
<dbReference type="EMBL" id="CP001616">
    <property type="protein sequence ID" value="ACQ93862.1"/>
    <property type="molecule type" value="Genomic_DNA"/>
</dbReference>
<dbReference type="RefSeq" id="WP_015879330.1">
    <property type="nucleotide sequence ID" value="NC_012691.1"/>
</dbReference>
<dbReference type="SMR" id="C4L8Z2"/>
<dbReference type="STRING" id="595494.Tola_2264"/>
<dbReference type="KEGG" id="tau:Tola_2264"/>
<dbReference type="eggNOG" id="COG0691">
    <property type="taxonomic scope" value="Bacteria"/>
</dbReference>
<dbReference type="HOGENOM" id="CLU_108953_3_0_6"/>
<dbReference type="OrthoDB" id="9805462at2"/>
<dbReference type="Proteomes" id="UP000009073">
    <property type="component" value="Chromosome"/>
</dbReference>
<dbReference type="GO" id="GO:0005829">
    <property type="term" value="C:cytosol"/>
    <property type="evidence" value="ECO:0007669"/>
    <property type="project" value="TreeGrafter"/>
</dbReference>
<dbReference type="GO" id="GO:0003723">
    <property type="term" value="F:RNA binding"/>
    <property type="evidence" value="ECO:0007669"/>
    <property type="project" value="UniProtKB-UniRule"/>
</dbReference>
<dbReference type="GO" id="GO:0070929">
    <property type="term" value="P:trans-translation"/>
    <property type="evidence" value="ECO:0007669"/>
    <property type="project" value="UniProtKB-UniRule"/>
</dbReference>
<dbReference type="CDD" id="cd09294">
    <property type="entry name" value="SmpB"/>
    <property type="match status" value="1"/>
</dbReference>
<dbReference type="Gene3D" id="2.40.280.10">
    <property type="match status" value="1"/>
</dbReference>
<dbReference type="HAMAP" id="MF_00023">
    <property type="entry name" value="SmpB"/>
    <property type="match status" value="1"/>
</dbReference>
<dbReference type="InterPro" id="IPR023620">
    <property type="entry name" value="SmpB"/>
</dbReference>
<dbReference type="InterPro" id="IPR000037">
    <property type="entry name" value="SsrA-bd_prot"/>
</dbReference>
<dbReference type="InterPro" id="IPR020081">
    <property type="entry name" value="SsrA-bd_prot_CS"/>
</dbReference>
<dbReference type="NCBIfam" id="NF003843">
    <property type="entry name" value="PRK05422.1"/>
    <property type="match status" value="1"/>
</dbReference>
<dbReference type="NCBIfam" id="TIGR00086">
    <property type="entry name" value="smpB"/>
    <property type="match status" value="1"/>
</dbReference>
<dbReference type="PANTHER" id="PTHR30308:SF2">
    <property type="entry name" value="SSRA-BINDING PROTEIN"/>
    <property type="match status" value="1"/>
</dbReference>
<dbReference type="PANTHER" id="PTHR30308">
    <property type="entry name" value="TMRNA-BINDING COMPONENT OF TRANS-TRANSLATION TAGGING COMPLEX"/>
    <property type="match status" value="1"/>
</dbReference>
<dbReference type="Pfam" id="PF01668">
    <property type="entry name" value="SmpB"/>
    <property type="match status" value="1"/>
</dbReference>
<dbReference type="SUPFAM" id="SSF74982">
    <property type="entry name" value="Small protein B (SmpB)"/>
    <property type="match status" value="1"/>
</dbReference>
<dbReference type="PROSITE" id="PS01317">
    <property type="entry name" value="SSRP"/>
    <property type="match status" value="1"/>
</dbReference>
<proteinExistence type="inferred from homology"/>
<reference key="1">
    <citation type="submission" date="2009-05" db="EMBL/GenBank/DDBJ databases">
        <title>Complete sequence of Tolumonas auensis DSM 9187.</title>
        <authorList>
            <consortium name="US DOE Joint Genome Institute"/>
            <person name="Lucas S."/>
            <person name="Copeland A."/>
            <person name="Lapidus A."/>
            <person name="Glavina del Rio T."/>
            <person name="Tice H."/>
            <person name="Bruce D."/>
            <person name="Goodwin L."/>
            <person name="Pitluck S."/>
            <person name="Chertkov O."/>
            <person name="Brettin T."/>
            <person name="Detter J.C."/>
            <person name="Han C."/>
            <person name="Larimer F."/>
            <person name="Land M."/>
            <person name="Hauser L."/>
            <person name="Kyrpides N."/>
            <person name="Mikhailova N."/>
            <person name="Spring S."/>
            <person name="Beller H."/>
        </authorList>
    </citation>
    <scope>NUCLEOTIDE SEQUENCE [LARGE SCALE GENOMIC DNA]</scope>
    <source>
        <strain>DSM 9187 / NBRC 110442 / TA 4</strain>
    </source>
</reference>
<protein>
    <recommendedName>
        <fullName evidence="1">SsrA-binding protein</fullName>
    </recommendedName>
    <alternativeName>
        <fullName evidence="1">Small protein B</fullName>
    </alternativeName>
</protein>
<evidence type="ECO:0000255" key="1">
    <source>
        <dbReference type="HAMAP-Rule" id="MF_00023"/>
    </source>
</evidence>
<evidence type="ECO:0000256" key="2">
    <source>
        <dbReference type="SAM" id="MobiDB-lite"/>
    </source>
</evidence>